<protein>
    <recommendedName>
        <fullName>Subtilisin-like protease 6</fullName>
        <ecNumber>3.4.21.-</ecNumber>
    </recommendedName>
    <allergenName>Tri m 2</allergenName>
</protein>
<comment type="function">
    <text evidence="1">Secreted subtilisin-like serine protease with keratinolytic activity that contributes to pathogenicity.</text>
</comment>
<comment type="subcellular location">
    <subcellularLocation>
        <location evidence="1">Secreted</location>
    </subcellularLocation>
</comment>
<comment type="allergen">
    <text>Causes an allergic reaction in human.</text>
</comment>
<comment type="similarity">
    <text evidence="4">Belongs to the peptidase S8 family.</text>
</comment>
<feature type="signal peptide" evidence="2">
    <location>
        <begin position="1" status="less than"/>
        <end position="18"/>
    </location>
</feature>
<feature type="propeptide" id="PRO_0000397800" evidence="1">
    <location>
        <begin position="19"/>
        <end position="125"/>
    </location>
</feature>
<feature type="chain" id="PRO_0000397801" description="Subtilisin-like protease 6">
    <location>
        <begin position="126"/>
        <end position="405" status="greater than"/>
    </location>
</feature>
<feature type="domain" description="Inhibitor I9" evidence="2">
    <location>
        <begin position="34"/>
        <end position="118"/>
    </location>
</feature>
<feature type="domain" description="Peptidase S8" evidence="3">
    <location>
        <begin position="133"/>
        <end position="405"/>
    </location>
</feature>
<feature type="active site" description="Charge relay system" evidence="3">
    <location>
        <position position="165"/>
    </location>
</feature>
<feature type="active site" description="Charge relay system" evidence="3">
    <location>
        <position position="196"/>
    </location>
</feature>
<feature type="active site" description="Charge relay system" evidence="3">
    <location>
        <position position="356"/>
    </location>
</feature>
<feature type="glycosylation site" description="N-linked (GlcNAc...) asparagine" evidence="2">
    <location>
        <position position="121"/>
    </location>
</feature>
<feature type="glycosylation site" description="N-linked (GlcNAc...) asparagine" evidence="2">
    <location>
        <position position="124"/>
    </location>
</feature>
<feature type="glycosylation site" description="N-linked (GlcNAc...) asparagine" evidence="2">
    <location>
        <position position="250"/>
    </location>
</feature>
<feature type="glycosylation site" description="N-linked (GlcNAc...) asparagine" evidence="2">
    <location>
        <position position="262"/>
    </location>
</feature>
<feature type="non-terminal residue">
    <location>
        <position position="1"/>
    </location>
</feature>
<feature type="non-terminal residue">
    <location>
        <position position="405"/>
    </location>
</feature>
<dbReference type="EC" id="3.4.21.-"/>
<dbReference type="EMBL" id="AJ430841">
    <property type="protein sequence ID" value="CAD23616.1"/>
    <property type="molecule type" value="Genomic_DNA"/>
</dbReference>
<dbReference type="EMBL" id="AJ430842">
    <property type="protein sequence ID" value="CAD23617.1"/>
    <property type="molecule type" value="Genomic_DNA"/>
</dbReference>
<dbReference type="EMBL" id="AJ430843">
    <property type="protein sequence ID" value="CAD23618.1"/>
    <property type="molecule type" value="Genomic_DNA"/>
</dbReference>
<dbReference type="SMR" id="Q8J077"/>
<dbReference type="GlyCosmos" id="Q8J077">
    <property type="glycosylation" value="4 sites, No reported glycans"/>
</dbReference>
<dbReference type="GO" id="GO:0005576">
    <property type="term" value="C:extracellular region"/>
    <property type="evidence" value="ECO:0007669"/>
    <property type="project" value="UniProtKB-SubCell"/>
</dbReference>
<dbReference type="GO" id="GO:0004252">
    <property type="term" value="F:serine-type endopeptidase activity"/>
    <property type="evidence" value="ECO:0007669"/>
    <property type="project" value="InterPro"/>
</dbReference>
<dbReference type="GO" id="GO:0006508">
    <property type="term" value="P:proteolysis"/>
    <property type="evidence" value="ECO:0007669"/>
    <property type="project" value="UniProtKB-KW"/>
</dbReference>
<dbReference type="CDD" id="cd04077">
    <property type="entry name" value="Peptidases_S8_PCSK9_ProteinaseK_like"/>
    <property type="match status" value="1"/>
</dbReference>
<dbReference type="FunFam" id="3.40.50.200:FF:000014">
    <property type="entry name" value="Proteinase K"/>
    <property type="match status" value="1"/>
</dbReference>
<dbReference type="Gene3D" id="3.30.70.80">
    <property type="entry name" value="Peptidase S8 propeptide/proteinase inhibitor I9"/>
    <property type="match status" value="1"/>
</dbReference>
<dbReference type="Gene3D" id="3.40.50.200">
    <property type="entry name" value="Peptidase S8/S53 domain"/>
    <property type="match status" value="1"/>
</dbReference>
<dbReference type="InterPro" id="IPR034193">
    <property type="entry name" value="PCSK9_ProteinaseK-like"/>
</dbReference>
<dbReference type="InterPro" id="IPR000209">
    <property type="entry name" value="Peptidase_S8/S53_dom"/>
</dbReference>
<dbReference type="InterPro" id="IPR036852">
    <property type="entry name" value="Peptidase_S8/S53_dom_sf"/>
</dbReference>
<dbReference type="InterPro" id="IPR023827">
    <property type="entry name" value="Peptidase_S8_Asp-AS"/>
</dbReference>
<dbReference type="InterPro" id="IPR022398">
    <property type="entry name" value="Peptidase_S8_His-AS"/>
</dbReference>
<dbReference type="InterPro" id="IPR023828">
    <property type="entry name" value="Peptidase_S8_Ser-AS"/>
</dbReference>
<dbReference type="InterPro" id="IPR050131">
    <property type="entry name" value="Peptidase_S8_subtilisin-like"/>
</dbReference>
<dbReference type="InterPro" id="IPR015500">
    <property type="entry name" value="Peptidase_S8_subtilisin-rel"/>
</dbReference>
<dbReference type="InterPro" id="IPR010259">
    <property type="entry name" value="S8pro/Inhibitor_I9"/>
</dbReference>
<dbReference type="InterPro" id="IPR037045">
    <property type="entry name" value="S8pro/Inhibitor_I9_sf"/>
</dbReference>
<dbReference type="PANTHER" id="PTHR43806:SF11">
    <property type="entry name" value="CEREVISIN-RELATED"/>
    <property type="match status" value="1"/>
</dbReference>
<dbReference type="PANTHER" id="PTHR43806">
    <property type="entry name" value="PEPTIDASE S8"/>
    <property type="match status" value="1"/>
</dbReference>
<dbReference type="Pfam" id="PF05922">
    <property type="entry name" value="Inhibitor_I9"/>
    <property type="match status" value="1"/>
</dbReference>
<dbReference type="Pfam" id="PF00082">
    <property type="entry name" value="Peptidase_S8"/>
    <property type="match status" value="1"/>
</dbReference>
<dbReference type="PRINTS" id="PR00723">
    <property type="entry name" value="SUBTILISIN"/>
</dbReference>
<dbReference type="SUPFAM" id="SSF54897">
    <property type="entry name" value="Protease propeptides/inhibitors"/>
    <property type="match status" value="1"/>
</dbReference>
<dbReference type="SUPFAM" id="SSF52743">
    <property type="entry name" value="Subtilisin-like"/>
    <property type="match status" value="1"/>
</dbReference>
<dbReference type="PROSITE" id="PS51892">
    <property type="entry name" value="SUBTILASE"/>
    <property type="match status" value="1"/>
</dbReference>
<dbReference type="PROSITE" id="PS00136">
    <property type="entry name" value="SUBTILASE_ASP"/>
    <property type="match status" value="1"/>
</dbReference>
<dbReference type="PROSITE" id="PS00137">
    <property type="entry name" value="SUBTILASE_HIS"/>
    <property type="match status" value="1"/>
</dbReference>
<dbReference type="PROSITE" id="PS00138">
    <property type="entry name" value="SUBTILASE_SER"/>
    <property type="match status" value="1"/>
</dbReference>
<reference key="1">
    <citation type="submission" date="2002-02" db="EMBL/GenBank/DDBJ databases">
        <title>Development of DNA markers to explore the genetic relatedness of strains of the two dermatophyte species causing Favus of human and mouse.</title>
        <authorList>
            <person name="Probst S."/>
            <person name="Polyakov I."/>
            <person name="Ivanova L."/>
            <person name="Graeser Y."/>
        </authorList>
    </citation>
    <scope>NUCLEOTIDE SEQUENCE [GENOMIC DNA]</scope>
    <source>
        <strain>CBS 433.63</strain>
        <strain>VKPGF 232/181</strain>
        <strain>VKPGF 235/25</strain>
    </source>
</reference>
<keyword id="KW-0020">Allergen</keyword>
<keyword id="KW-0325">Glycoprotein</keyword>
<keyword id="KW-0378">Hydrolase</keyword>
<keyword id="KW-0645">Protease</keyword>
<keyword id="KW-0964">Secreted</keyword>
<keyword id="KW-0720">Serine protease</keyword>
<keyword id="KW-0732">Signal</keyword>
<keyword id="KW-0843">Virulence</keyword>
<keyword id="KW-0865">Zymogen</keyword>
<organism>
    <name type="scientific">Trichophyton schoenleinii</name>
    <dbReference type="NCBI Taxonomy" id="34386"/>
    <lineage>
        <taxon>Eukaryota</taxon>
        <taxon>Fungi</taxon>
        <taxon>Dikarya</taxon>
        <taxon>Ascomycota</taxon>
        <taxon>Pezizomycotina</taxon>
        <taxon>Eurotiomycetes</taxon>
        <taxon>Eurotiomycetidae</taxon>
        <taxon>Onygenales</taxon>
        <taxon>Arthrodermataceae</taxon>
        <taxon>Trichophyton</taxon>
    </lineage>
</organism>
<name>SUB6_TRISH</name>
<sequence>FITKAIPIVLAALSAVNGAKILEAGPHAETIPNKYIVVMKKDVSDEAFSTHTTWLSQNLNRRLMRRSGSSKAMAGMQNKYSLGGIFRAYSGEFDDAMIKDISNHDDVDYIEPDFVVRTSTNGTNLTRQENVPSWGLARVGSKQAGGTTYYYDSSAGKGVTAYVIDTGIDIEHEDFGGRAKWGKNFVDQRDEDCNGHGTHVAGTVGGTKYGLAKSVSLVAVKVLDCDGSGSNSGVIRGMEWAMREASGGGNGTAKAAGKSVMNMSLGGPRSQASNDAARAISEAGIFMAVAAGNENMDAQHSSPASEPSVCTVAASTEDDGKAEFSNYGAVVDVYAPGKDITSLKPGGSTDTLSGTSMASPHVCGLGAYLIGLGKQGGPGLCDTIKQMANEAIQRPGEGTTGKLIY</sequence>
<accession>Q8J077</accession>
<evidence type="ECO:0000250" key="1"/>
<evidence type="ECO:0000255" key="2"/>
<evidence type="ECO:0000255" key="3">
    <source>
        <dbReference type="PROSITE-ProRule" id="PRU01240"/>
    </source>
</evidence>
<evidence type="ECO:0000305" key="4"/>
<proteinExistence type="evidence at protein level"/>
<gene>
    <name type="primary">SUB6</name>
    <name type="synonym">tri m 2</name>
</gene>